<proteinExistence type="inferred from homology"/>
<name>HISZ_BACC0</name>
<comment type="function">
    <text evidence="1">Required for the first step of histidine biosynthesis. May allow the feedback regulation of ATP phosphoribosyltransferase activity by histidine.</text>
</comment>
<comment type="pathway">
    <text evidence="1">Amino-acid biosynthesis; L-histidine biosynthesis; L-histidine from 5-phospho-alpha-D-ribose 1-diphosphate: step 1/9.</text>
</comment>
<comment type="subunit">
    <text evidence="1">Heteromultimer composed of HisG and HisZ subunits.</text>
</comment>
<comment type="subcellular location">
    <subcellularLocation>
        <location evidence="1">Cytoplasm</location>
    </subcellularLocation>
</comment>
<comment type="miscellaneous">
    <text>This function is generally fulfilled by the C-terminal part of HisG, which is missing in some bacteria such as this one.</text>
</comment>
<comment type="similarity">
    <text evidence="1">Belongs to the class-II aminoacyl-tRNA synthetase family. HisZ subfamily.</text>
</comment>
<reference key="1">
    <citation type="submission" date="2008-10" db="EMBL/GenBank/DDBJ databases">
        <title>Genome sequence of Bacillus cereus AH820.</title>
        <authorList>
            <person name="Dodson R.J."/>
            <person name="Durkin A.S."/>
            <person name="Rosovitz M.J."/>
            <person name="Rasko D.A."/>
            <person name="Hoffmaster A."/>
            <person name="Ravel J."/>
            <person name="Sutton G."/>
        </authorList>
    </citation>
    <scope>NUCLEOTIDE SEQUENCE [LARGE SCALE GENOMIC DNA]</scope>
    <source>
        <strain>AH820</strain>
    </source>
</reference>
<feature type="chain" id="PRO_1000117670" description="ATP phosphoribosyltransferase regulatory subunit">
    <location>
        <begin position="1"/>
        <end position="420"/>
    </location>
</feature>
<evidence type="ECO:0000255" key="1">
    <source>
        <dbReference type="HAMAP-Rule" id="MF_00125"/>
    </source>
</evidence>
<protein>
    <recommendedName>
        <fullName evidence="1">ATP phosphoribosyltransferase regulatory subunit</fullName>
    </recommendedName>
</protein>
<organism>
    <name type="scientific">Bacillus cereus (strain AH820)</name>
    <dbReference type="NCBI Taxonomy" id="405535"/>
    <lineage>
        <taxon>Bacteria</taxon>
        <taxon>Bacillati</taxon>
        <taxon>Bacillota</taxon>
        <taxon>Bacilli</taxon>
        <taxon>Bacillales</taxon>
        <taxon>Bacillaceae</taxon>
        <taxon>Bacillus</taxon>
        <taxon>Bacillus cereus group</taxon>
    </lineage>
</organism>
<accession>B7JFY9</accession>
<keyword id="KW-0028">Amino-acid biosynthesis</keyword>
<keyword id="KW-0963">Cytoplasm</keyword>
<keyword id="KW-0368">Histidine biosynthesis</keyword>
<sequence length="420" mass="48818">MTKWKRANPNGTRDYLFEECTLIEEVEQKLRRTFLERGYEEIRTPTIEFYDVFAFQSRPIDEEKMYKFFDEKGRIIVLRPDMTIPLARVVGTQRCDTPLKVTYSGNVFRANESLAGKYNEIVQSGIEVIGIDNVRAEIECVISVIQSLQKLKVQSFTIEIGQVQLYKCIVKKLSIHEEEEKVLRTYIESKNYASLSNFIRDKKLDRCDETVKLLEKLPRLFGNLEVIEEAEKLASSNEMKMAITRVKEIYEAIEKLGYGSYISIDLGMIQHLDYYTGVIFKGYIYEIGEEIVSGGRYDELIGNFGEMLPAVGLAVQVNQIVKALQEQQEPYERKRIDIMIHYELNRLAEAERLRNLFQKDGKKVALSLFSNLNDTFQFARKNQIVTVVEAKSESLVEYVWKEKWVVQKEGETSCVTFKLR</sequence>
<gene>
    <name evidence="1" type="primary">hisZ</name>
    <name type="ordered locus">BCAH820_1495</name>
</gene>
<dbReference type="EMBL" id="CP001283">
    <property type="protein sequence ID" value="ACK90051.1"/>
    <property type="molecule type" value="Genomic_DNA"/>
</dbReference>
<dbReference type="RefSeq" id="WP_000170324.1">
    <property type="nucleotide sequence ID" value="NC_011773.1"/>
</dbReference>
<dbReference type="SMR" id="B7JFY9"/>
<dbReference type="KEGG" id="bcu:BCAH820_1495"/>
<dbReference type="HOGENOM" id="CLU_025113_0_0_9"/>
<dbReference type="UniPathway" id="UPA00031">
    <property type="reaction ID" value="UER00006"/>
</dbReference>
<dbReference type="Proteomes" id="UP000001363">
    <property type="component" value="Chromosome"/>
</dbReference>
<dbReference type="GO" id="GO:0005737">
    <property type="term" value="C:cytoplasm"/>
    <property type="evidence" value="ECO:0007669"/>
    <property type="project" value="UniProtKB-SubCell"/>
</dbReference>
<dbReference type="GO" id="GO:0140096">
    <property type="term" value="F:catalytic activity, acting on a protein"/>
    <property type="evidence" value="ECO:0007669"/>
    <property type="project" value="UniProtKB-ARBA"/>
</dbReference>
<dbReference type="GO" id="GO:0004821">
    <property type="term" value="F:histidine-tRNA ligase activity"/>
    <property type="evidence" value="ECO:0007669"/>
    <property type="project" value="TreeGrafter"/>
</dbReference>
<dbReference type="GO" id="GO:0016740">
    <property type="term" value="F:transferase activity"/>
    <property type="evidence" value="ECO:0007669"/>
    <property type="project" value="UniProtKB-ARBA"/>
</dbReference>
<dbReference type="GO" id="GO:0006427">
    <property type="term" value="P:histidyl-tRNA aminoacylation"/>
    <property type="evidence" value="ECO:0007669"/>
    <property type="project" value="TreeGrafter"/>
</dbReference>
<dbReference type="GO" id="GO:0000105">
    <property type="term" value="P:L-histidine biosynthetic process"/>
    <property type="evidence" value="ECO:0007669"/>
    <property type="project" value="UniProtKB-UniRule"/>
</dbReference>
<dbReference type="CDD" id="cd00773">
    <property type="entry name" value="HisRS-like_core"/>
    <property type="match status" value="1"/>
</dbReference>
<dbReference type="FunFam" id="3.30.930.10:FF:000060">
    <property type="entry name" value="ATP phosphoribosyltransferase regulatory subunit"/>
    <property type="match status" value="1"/>
</dbReference>
<dbReference type="Gene3D" id="3.30.930.10">
    <property type="entry name" value="Bira Bifunctional Protein, Domain 2"/>
    <property type="match status" value="1"/>
</dbReference>
<dbReference type="HAMAP" id="MF_00125">
    <property type="entry name" value="HisZ"/>
    <property type="match status" value="1"/>
</dbReference>
<dbReference type="InterPro" id="IPR006195">
    <property type="entry name" value="aa-tRNA-synth_II"/>
</dbReference>
<dbReference type="InterPro" id="IPR045864">
    <property type="entry name" value="aa-tRNA-synth_II/BPL/LPL"/>
</dbReference>
<dbReference type="InterPro" id="IPR041715">
    <property type="entry name" value="HisRS-like_core"/>
</dbReference>
<dbReference type="InterPro" id="IPR004516">
    <property type="entry name" value="HisRS/HisZ"/>
</dbReference>
<dbReference type="InterPro" id="IPR004517">
    <property type="entry name" value="HisZ"/>
</dbReference>
<dbReference type="NCBIfam" id="TIGR00443">
    <property type="entry name" value="hisZ_biosyn_reg"/>
    <property type="match status" value="1"/>
</dbReference>
<dbReference type="NCBIfam" id="NF008938">
    <property type="entry name" value="PRK12292.1-6"/>
    <property type="match status" value="1"/>
</dbReference>
<dbReference type="PANTHER" id="PTHR43707:SF6">
    <property type="entry name" value="ATP PHOSPHORIBOSYLTRANSFERASE REGULATORY SUBUNIT"/>
    <property type="match status" value="1"/>
</dbReference>
<dbReference type="PANTHER" id="PTHR43707">
    <property type="entry name" value="HISTIDYL-TRNA SYNTHETASE"/>
    <property type="match status" value="1"/>
</dbReference>
<dbReference type="Pfam" id="PF13393">
    <property type="entry name" value="tRNA-synt_His"/>
    <property type="match status" value="1"/>
</dbReference>
<dbReference type="PIRSF" id="PIRSF001549">
    <property type="entry name" value="His-tRNA_synth"/>
    <property type="match status" value="1"/>
</dbReference>
<dbReference type="SUPFAM" id="SSF55681">
    <property type="entry name" value="Class II aaRS and biotin synthetases"/>
    <property type="match status" value="1"/>
</dbReference>
<dbReference type="PROSITE" id="PS50862">
    <property type="entry name" value="AA_TRNA_LIGASE_II"/>
    <property type="match status" value="1"/>
</dbReference>